<feature type="chain" id="PRO_0000152282" description="Sugar fermentation stimulation protein A">
    <location>
        <begin position="1"/>
        <end position="234"/>
    </location>
</feature>
<feature type="DNA-binding region" description="H-T-H motif" evidence="1">
    <location>
        <begin position="201"/>
        <end position="220"/>
    </location>
</feature>
<feature type="strand" evidence="5">
    <location>
        <begin position="8"/>
        <end position="16"/>
    </location>
</feature>
<feature type="turn" evidence="5">
    <location>
        <begin position="17"/>
        <end position="19"/>
    </location>
</feature>
<feature type="strand" evidence="5">
    <location>
        <begin position="20"/>
        <end position="24"/>
    </location>
</feature>
<feature type="strand" evidence="5">
    <location>
        <begin position="30"/>
        <end position="34"/>
    </location>
</feature>
<feature type="turn" evidence="5">
    <location>
        <begin position="42"/>
        <end position="44"/>
    </location>
</feature>
<feature type="strand" evidence="5">
    <location>
        <begin position="50"/>
        <end position="55"/>
    </location>
</feature>
<feature type="strand" evidence="5">
    <location>
        <begin position="65"/>
        <end position="71"/>
    </location>
</feature>
<feature type="strand" evidence="5">
    <location>
        <begin position="77"/>
        <end position="79"/>
    </location>
</feature>
<feature type="helix" evidence="5">
    <location>
        <begin position="82"/>
        <end position="84"/>
    </location>
</feature>
<feature type="helix" evidence="5">
    <location>
        <begin position="85"/>
        <end position="94"/>
    </location>
</feature>
<feature type="helix" evidence="5">
    <location>
        <begin position="99"/>
        <end position="101"/>
    </location>
</feature>
<feature type="strand" evidence="5">
    <location>
        <begin position="105"/>
        <end position="112"/>
    </location>
</feature>
<feature type="strand" evidence="5">
    <location>
        <begin position="119"/>
        <end position="126"/>
    </location>
</feature>
<feature type="strand" evidence="5">
    <location>
        <begin position="129"/>
        <end position="139"/>
    </location>
</feature>
<feature type="strand" evidence="5">
    <location>
        <begin position="141"/>
        <end position="143"/>
    </location>
</feature>
<feature type="strand" evidence="5">
    <location>
        <begin position="146"/>
        <end position="149"/>
    </location>
</feature>
<feature type="helix" evidence="5">
    <location>
        <begin position="155"/>
        <end position="169"/>
    </location>
</feature>
<feature type="strand" evidence="5">
    <location>
        <begin position="173"/>
        <end position="180"/>
    </location>
</feature>
<feature type="strand" evidence="5">
    <location>
        <begin position="187"/>
        <end position="190"/>
    </location>
</feature>
<feature type="turn" evidence="5">
    <location>
        <begin position="192"/>
        <end position="194"/>
    </location>
</feature>
<feature type="helix" evidence="5">
    <location>
        <begin position="196"/>
        <end position="207"/>
    </location>
</feature>
<feature type="strand" evidence="5">
    <location>
        <begin position="211"/>
        <end position="220"/>
    </location>
</feature>
<feature type="strand" evidence="5">
    <location>
        <begin position="223"/>
        <end position="229"/>
    </location>
</feature>
<proteinExistence type="evidence at protein level"/>
<name>SFSA_ECOLI</name>
<comment type="function">
    <text evidence="1 2 3">Binds to DNA non-specifically. Could be a regulatory factor involved in maltose metabolism.</text>
</comment>
<comment type="interaction">
    <interactant intactId="EBI-556413">
        <id>P0A823</id>
    </interactant>
    <interactant intactId="EBI-556431">
        <id>P0AFT5</id>
        <label>btsR</label>
    </interactant>
    <organismsDiffer>false</organismsDiffer>
    <experiments>2</experiments>
</comment>
<comment type="interaction">
    <interactant intactId="EBI-556413">
        <id>P0A823</id>
    </interactant>
    <interactant intactId="EBI-548584">
        <id>P07004</id>
        <label>proA</label>
    </interactant>
    <organismsDiffer>false</organismsDiffer>
    <experiments>4</experiments>
</comment>
<comment type="disruption phenotype">
    <text evidence="2">No visible phenotype.</text>
</comment>
<comment type="similarity">
    <text evidence="1">Belongs to the SfsA family.</text>
</comment>
<comment type="sequence caution" evidence="4">
    <conflict type="frameshift">
        <sequence resource="EMBL" id="M34945"/>
    </conflict>
</comment>
<organism>
    <name type="scientific">Escherichia coli (strain K12)</name>
    <dbReference type="NCBI Taxonomy" id="83333"/>
    <lineage>
        <taxon>Bacteria</taxon>
        <taxon>Pseudomonadati</taxon>
        <taxon>Pseudomonadota</taxon>
        <taxon>Gammaproteobacteria</taxon>
        <taxon>Enterobacterales</taxon>
        <taxon>Enterobacteriaceae</taxon>
        <taxon>Escherichia</taxon>
    </lineage>
</organism>
<sequence length="234" mass="26229">MEFSPPLQRATLIQRYKRFLADVITPDGRELTLHCPNTGAMTGCATPGDTVWYSTSDNTKRKYPHTWELTQSQSGAFICVNTLWANRLTKEAILNESISELSGYSSLKSEVKYGAERSRIDFMLQADSRPDCYIEVKSVTLAENEQGYFPDAVTERGQKHLRELMSVAAEGQRAVIFFAVLHSAITRFSPARHIDEKYAQLLSEAQQRGVEILAYKAEISAEGMALKKSLPVTL</sequence>
<protein>
    <recommendedName>
        <fullName evidence="1">Sugar fermentation stimulation protein A</fullName>
    </recommendedName>
</protein>
<gene>
    <name evidence="1" type="primary">sfsA</name>
    <name type="synonym">sfs1</name>
    <name type="ordered locus">b0146</name>
    <name type="ordered locus">JW0142</name>
</gene>
<evidence type="ECO:0000255" key="1">
    <source>
        <dbReference type="HAMAP-Rule" id="MF_00095"/>
    </source>
</evidence>
<evidence type="ECO:0000269" key="2">
    <source>
    </source>
</evidence>
<evidence type="ECO:0000269" key="3">
    <source>
    </source>
</evidence>
<evidence type="ECO:0000305" key="4"/>
<evidence type="ECO:0007829" key="5">
    <source>
        <dbReference type="PDB" id="4DAP"/>
    </source>
</evidence>
<accession>P0A823</accession>
<accession>P18273</accession>
<keyword id="KW-0002">3D-structure</keyword>
<keyword id="KW-0238">DNA-binding</keyword>
<keyword id="KW-1185">Reference proteome</keyword>
<dbReference type="EMBL" id="M34945">
    <property type="status" value="NOT_ANNOTATED_CDS"/>
    <property type="molecule type" value="Genomic_DNA"/>
</dbReference>
<dbReference type="EMBL" id="M60726">
    <property type="protein sequence ID" value="AAA72977.1"/>
    <property type="molecule type" value="Genomic_DNA"/>
</dbReference>
<dbReference type="EMBL" id="U00096">
    <property type="protein sequence ID" value="AAC73257.1"/>
    <property type="molecule type" value="Genomic_DNA"/>
</dbReference>
<dbReference type="EMBL" id="AP009048">
    <property type="protein sequence ID" value="BAB96723.1"/>
    <property type="molecule type" value="Genomic_DNA"/>
</dbReference>
<dbReference type="PIR" id="A43671">
    <property type="entry name" value="A43671"/>
</dbReference>
<dbReference type="RefSeq" id="NP_414688.1">
    <property type="nucleotide sequence ID" value="NC_000913.3"/>
</dbReference>
<dbReference type="RefSeq" id="WP_000396036.1">
    <property type="nucleotide sequence ID" value="NZ_STEB01000010.1"/>
</dbReference>
<dbReference type="PDB" id="4DAP">
    <property type="method" value="X-ray"/>
    <property type="resolution" value="2.20 A"/>
    <property type="chains" value="A=1-234"/>
</dbReference>
<dbReference type="PDBsum" id="4DAP"/>
<dbReference type="SMR" id="P0A823"/>
<dbReference type="BioGRID" id="4259743">
    <property type="interactions" value="92"/>
</dbReference>
<dbReference type="BioGRID" id="849255">
    <property type="interactions" value="2"/>
</dbReference>
<dbReference type="DIP" id="DIP-48084N"/>
<dbReference type="FunCoup" id="P0A823">
    <property type="interactions" value="28"/>
</dbReference>
<dbReference type="IntAct" id="P0A823">
    <property type="interactions" value="7"/>
</dbReference>
<dbReference type="STRING" id="511145.b0146"/>
<dbReference type="jPOST" id="P0A823"/>
<dbReference type="PaxDb" id="511145-b0146"/>
<dbReference type="EnsemblBacteria" id="AAC73257">
    <property type="protein sequence ID" value="AAC73257"/>
    <property type="gene ID" value="b0146"/>
</dbReference>
<dbReference type="GeneID" id="75202039"/>
<dbReference type="GeneID" id="944855"/>
<dbReference type="KEGG" id="ecj:JW0142"/>
<dbReference type="KEGG" id="eco:b0146"/>
<dbReference type="KEGG" id="ecoc:C3026_00635"/>
<dbReference type="PATRIC" id="fig|1411691.4.peg.2135"/>
<dbReference type="EchoBASE" id="EB0942"/>
<dbReference type="eggNOG" id="COG1489">
    <property type="taxonomic scope" value="Bacteria"/>
</dbReference>
<dbReference type="HOGENOM" id="CLU_052299_2_0_6"/>
<dbReference type="InParanoid" id="P0A823"/>
<dbReference type="OMA" id="CANTGPM"/>
<dbReference type="OrthoDB" id="9802365at2"/>
<dbReference type="PhylomeDB" id="P0A823"/>
<dbReference type="BioCyc" id="EcoCyc:EG10949-MONOMER"/>
<dbReference type="EvolutionaryTrace" id="P0A823"/>
<dbReference type="PRO" id="PR:P0A823"/>
<dbReference type="Proteomes" id="UP000000625">
    <property type="component" value="Chromosome"/>
</dbReference>
<dbReference type="GO" id="GO:0003677">
    <property type="term" value="F:DNA binding"/>
    <property type="evidence" value="ECO:0000314"/>
    <property type="project" value="EcoCyc"/>
</dbReference>
<dbReference type="GO" id="GO:0009891">
    <property type="term" value="P:positive regulation of biosynthetic process"/>
    <property type="evidence" value="ECO:0000315"/>
    <property type="project" value="EcoCyc"/>
</dbReference>
<dbReference type="CDD" id="cd22359">
    <property type="entry name" value="SfsA-like_bacterial"/>
    <property type="match status" value="1"/>
</dbReference>
<dbReference type="FunFam" id="2.40.50.580:FF:000001">
    <property type="entry name" value="Sugar fermentation stimulation protein A"/>
    <property type="match status" value="1"/>
</dbReference>
<dbReference type="FunFam" id="3.40.1350.60:FF:000001">
    <property type="entry name" value="Sugar fermentation stimulation protein A"/>
    <property type="match status" value="1"/>
</dbReference>
<dbReference type="Gene3D" id="2.40.50.580">
    <property type="match status" value="1"/>
</dbReference>
<dbReference type="Gene3D" id="3.40.1350.60">
    <property type="match status" value="1"/>
</dbReference>
<dbReference type="HAMAP" id="MF_00095">
    <property type="entry name" value="SfsA"/>
    <property type="match status" value="1"/>
</dbReference>
<dbReference type="InterPro" id="IPR005224">
    <property type="entry name" value="SfsA"/>
</dbReference>
<dbReference type="InterPro" id="IPR040452">
    <property type="entry name" value="SfsA_C"/>
</dbReference>
<dbReference type="InterPro" id="IPR041465">
    <property type="entry name" value="SfsA_N"/>
</dbReference>
<dbReference type="NCBIfam" id="TIGR00230">
    <property type="entry name" value="sfsA"/>
    <property type="match status" value="1"/>
</dbReference>
<dbReference type="PANTHER" id="PTHR30545">
    <property type="entry name" value="SUGAR FERMENTATION STIMULATION PROTEIN A"/>
    <property type="match status" value="1"/>
</dbReference>
<dbReference type="PANTHER" id="PTHR30545:SF2">
    <property type="entry name" value="SUGAR FERMENTATION STIMULATION PROTEIN A"/>
    <property type="match status" value="1"/>
</dbReference>
<dbReference type="Pfam" id="PF03749">
    <property type="entry name" value="SfsA"/>
    <property type="match status" value="1"/>
</dbReference>
<dbReference type="Pfam" id="PF17746">
    <property type="entry name" value="SfsA_N"/>
    <property type="match status" value="1"/>
</dbReference>
<reference key="1">
    <citation type="journal article" date="1990" name="J. Bacteriol.">
        <title>Identification and characterization of a new Escherichia coli gene that is a dosage-dependent suppressor of a dnaK deletion mutation.</title>
        <authorList>
            <person name="Kang P.J."/>
            <person name="Craig E.A."/>
        </authorList>
    </citation>
    <scope>NUCLEOTIDE SEQUENCE [GENOMIC DNA]</scope>
</reference>
<reference key="2">
    <citation type="journal article" date="1991" name="J. Bacteriol.">
        <title>Nucleotide sequence and characterization of the sfs1 gene: sfs1 is involved in CRP*-dependent mal gene expression in Escherichia coli.</title>
        <authorList>
            <person name="Kawamukai M."/>
            <person name="Utsumi R."/>
            <person name="Takeda K."/>
            <person name="Higashi A."/>
            <person name="Matsuda H."/>
            <person name="Choi Y.-L."/>
            <person name="Komano T."/>
        </authorList>
    </citation>
    <scope>NUCLEOTIDE SEQUENCE [GENOMIC DNA]</scope>
    <scope>FUNCTION</scope>
    <source>
        <strain>K12 / W3110 / ATCC 27325 / DSM 5911</strain>
    </source>
</reference>
<reference key="3">
    <citation type="journal article" date="1994" name="Nucleic Acids Res.">
        <title>Systematic sequencing of the Escherichia coli genome: analysis of the 2.4-4.1 min (110,917-193,643 bp) region.</title>
        <authorList>
            <person name="Fujita N."/>
            <person name="Mori H."/>
            <person name="Yura T."/>
            <person name="Ishihama A."/>
        </authorList>
    </citation>
    <scope>NUCLEOTIDE SEQUENCE [LARGE SCALE GENOMIC DNA]</scope>
    <source>
        <strain>K12 / W3110 / ATCC 27325 / DSM 5911</strain>
    </source>
</reference>
<reference key="4">
    <citation type="journal article" date="1997" name="Science">
        <title>The complete genome sequence of Escherichia coli K-12.</title>
        <authorList>
            <person name="Blattner F.R."/>
            <person name="Plunkett G. III"/>
            <person name="Bloch C.A."/>
            <person name="Perna N.T."/>
            <person name="Burland V."/>
            <person name="Riley M."/>
            <person name="Collado-Vides J."/>
            <person name="Glasner J.D."/>
            <person name="Rode C.K."/>
            <person name="Mayhew G.F."/>
            <person name="Gregor J."/>
            <person name="Davis N.W."/>
            <person name="Kirkpatrick H.A."/>
            <person name="Goeden M.A."/>
            <person name="Rose D.J."/>
            <person name="Mau B."/>
            <person name="Shao Y."/>
        </authorList>
    </citation>
    <scope>NUCLEOTIDE SEQUENCE [LARGE SCALE GENOMIC DNA]</scope>
    <source>
        <strain>K12 / MG1655 / ATCC 47076</strain>
    </source>
</reference>
<reference key="5">
    <citation type="journal article" date="2006" name="Mol. Syst. Biol.">
        <title>Highly accurate genome sequences of Escherichia coli K-12 strains MG1655 and W3110.</title>
        <authorList>
            <person name="Hayashi K."/>
            <person name="Morooka N."/>
            <person name="Yamamoto Y."/>
            <person name="Fujita K."/>
            <person name="Isono K."/>
            <person name="Choi S."/>
            <person name="Ohtsubo E."/>
            <person name="Baba T."/>
            <person name="Wanner B.L."/>
            <person name="Mori H."/>
            <person name="Horiuchi T."/>
        </authorList>
    </citation>
    <scope>NUCLEOTIDE SEQUENCE [LARGE SCALE GENOMIC DNA]</scope>
    <source>
        <strain>K12 / W3110 / ATCC 27325 / DSM 5911</strain>
    </source>
</reference>
<reference key="6">
    <citation type="journal article" date="2001" name="Biosci. Biotechnol. Biochem.">
        <title>Effects of the Escherichia coli sfsA gene on mal genes expression and a DNA binding activity of SfsA.</title>
        <authorList>
            <person name="Takeda K."/>
            <person name="Akimoto C."/>
            <person name="Kawamukai M."/>
        </authorList>
    </citation>
    <scope>FUNCTION</scope>
    <scope>DNA-BINDING</scope>
    <scope>DISRUPTION PHENOTYPE</scope>
</reference>